<reference key="1">
    <citation type="journal article" date="1985" name="Gene">
        <title>Nucleotide sequence of the immunity region of Bacillus subtilis bacteriophage phi 105: identification of the repressor gene and its mRNA and protein products.</title>
        <authorList>
            <person name="Cully D.F."/>
            <person name="Garro A.J."/>
        </authorList>
    </citation>
    <scope>NUCLEOTIDE SEQUENCE [GENOMIC DNA]</scope>
</reference>
<comment type="similarity">
    <text evidence="2">Belongs to the site-specific recombinase resolvase family.</text>
</comment>
<accession>P10427</accession>
<protein>
    <recommendedName>
        <fullName>Uncharacterized immunity region protein 3</fullName>
    </recommendedName>
</protein>
<dbReference type="EMBL" id="M11920">
    <property type="protein sequence ID" value="AAA88399.1"/>
    <property type="molecule type" value="Genomic_DNA"/>
</dbReference>
<dbReference type="SMR" id="P10427"/>
<dbReference type="GO" id="GO:0003677">
    <property type="term" value="F:DNA binding"/>
    <property type="evidence" value="ECO:0007669"/>
    <property type="project" value="UniProtKB-KW"/>
</dbReference>
<dbReference type="GO" id="GO:0000150">
    <property type="term" value="F:DNA strand exchange activity"/>
    <property type="evidence" value="ECO:0007669"/>
    <property type="project" value="UniProtKB-KW"/>
</dbReference>
<dbReference type="GO" id="GO:0015074">
    <property type="term" value="P:DNA integration"/>
    <property type="evidence" value="ECO:0007669"/>
    <property type="project" value="UniProtKB-KW"/>
</dbReference>
<dbReference type="CDD" id="cd00338">
    <property type="entry name" value="Ser_Recombinase"/>
    <property type="match status" value="1"/>
</dbReference>
<dbReference type="Gene3D" id="3.40.50.1390">
    <property type="entry name" value="Resolvase, N-terminal catalytic domain"/>
    <property type="match status" value="1"/>
</dbReference>
<dbReference type="InterPro" id="IPR006118">
    <property type="entry name" value="Recombinase_CS"/>
</dbReference>
<dbReference type="InterPro" id="IPR006119">
    <property type="entry name" value="Resolv_N"/>
</dbReference>
<dbReference type="InterPro" id="IPR036162">
    <property type="entry name" value="Resolvase-like_N_sf"/>
</dbReference>
<dbReference type="InterPro" id="IPR050639">
    <property type="entry name" value="SSR_resolvase"/>
</dbReference>
<dbReference type="PANTHER" id="PTHR30461:SF23">
    <property type="entry name" value="DNA RECOMBINASE-RELATED"/>
    <property type="match status" value="1"/>
</dbReference>
<dbReference type="PANTHER" id="PTHR30461">
    <property type="entry name" value="DNA-INVERTASE FROM LAMBDOID PROPHAGE"/>
    <property type="match status" value="1"/>
</dbReference>
<dbReference type="Pfam" id="PF00239">
    <property type="entry name" value="Resolvase"/>
    <property type="match status" value="1"/>
</dbReference>
<dbReference type="SUPFAM" id="SSF53041">
    <property type="entry name" value="Resolvase-like"/>
    <property type="match status" value="1"/>
</dbReference>
<dbReference type="PROSITE" id="PS00397">
    <property type="entry name" value="RECOMBINASES_1"/>
    <property type="match status" value="1"/>
</dbReference>
<dbReference type="PROSITE" id="PS51736">
    <property type="entry name" value="RECOMBINASES_3"/>
    <property type="match status" value="1"/>
</dbReference>
<feature type="chain" id="PRO_0000196388" description="Uncharacterized immunity region protein 3">
    <location>
        <begin position="1"/>
        <end position="82"/>
    </location>
</feature>
<feature type="domain" description="Resolvase/invertase-type recombinase catalytic" evidence="1">
    <location>
        <begin position="11"/>
        <end position="82"/>
    </location>
</feature>
<feature type="active site" description="O-(5'-phospho-DNA)-serine intermediate" evidence="1">
    <location>
        <position position="19"/>
    </location>
</feature>
<keyword id="KW-0229">DNA integration</keyword>
<keyword id="KW-0230">DNA invertase</keyword>
<keyword id="KW-0233">DNA recombination</keyword>
<keyword id="KW-0238">DNA-binding</keyword>
<sequence>MNLMDENTPKNVGIYVRVSTEEQAKEGYSISAQKEKLKAYCISQGWDSYKFYIDEGKSAKDIHRPSLELMLRHIEQGIMTHC</sequence>
<organism>
    <name type="scientific">Bacillus phage phi105</name>
    <name type="common">Bacteriophage phi-105</name>
    <dbReference type="NCBI Taxonomy" id="10717"/>
    <lineage>
        <taxon>Viruses</taxon>
        <taxon>Duplodnaviria</taxon>
        <taxon>Heunggongvirae</taxon>
        <taxon>Uroviricota</taxon>
        <taxon>Caudoviricetes</taxon>
        <taxon>Spizizenvirus</taxon>
        <taxon>Spizizenvirus sv105</taxon>
    </lineage>
</organism>
<organismHost>
    <name type="scientific">Bacillus subtilis</name>
    <dbReference type="NCBI Taxonomy" id="1423"/>
</organismHost>
<name>YIM3_BPPH1</name>
<evidence type="ECO:0000255" key="1">
    <source>
        <dbReference type="PROSITE-ProRule" id="PRU01072"/>
    </source>
</evidence>
<evidence type="ECO:0000305" key="2"/>
<proteinExistence type="inferred from homology"/>